<dbReference type="EC" id="3.1.1.110" evidence="3 4 8"/>
<dbReference type="EMBL" id="AE005673">
    <property type="protein sequence ID" value="AAK22805.1"/>
    <property type="molecule type" value="Genomic_DNA"/>
</dbReference>
<dbReference type="PIR" id="A87351">
    <property type="entry name" value="A87351"/>
</dbReference>
<dbReference type="RefSeq" id="NP_419637.1">
    <property type="nucleotide sequence ID" value="NC_002696.2"/>
</dbReference>
<dbReference type="RefSeq" id="WP_010918705.1">
    <property type="nucleotide sequence ID" value="NC_002696.2"/>
</dbReference>
<dbReference type="PDB" id="7PLB">
    <property type="method" value="X-ray"/>
    <property type="resolution" value="1.73 A"/>
    <property type="chains" value="A/B=2-289"/>
</dbReference>
<dbReference type="PDB" id="7PLC">
    <property type="method" value="X-ray"/>
    <property type="resolution" value="2.15 A"/>
    <property type="chains" value="A/B/C/D=2-289"/>
</dbReference>
<dbReference type="PDB" id="7PLD">
    <property type="method" value="X-ray"/>
    <property type="resolution" value="1.70 A"/>
    <property type="chains" value="A/B=2-289"/>
</dbReference>
<dbReference type="PDBsum" id="7PLB"/>
<dbReference type="PDBsum" id="7PLC"/>
<dbReference type="PDBsum" id="7PLD"/>
<dbReference type="SMR" id="Q9A9Z1"/>
<dbReference type="STRING" id="190650.CC_0820"/>
<dbReference type="EnsemblBacteria" id="AAK22805">
    <property type="protein sequence ID" value="AAK22805"/>
    <property type="gene ID" value="CC_0820"/>
</dbReference>
<dbReference type="KEGG" id="ccr:CC_0820"/>
<dbReference type="PATRIC" id="fig|190650.5.peg.833"/>
<dbReference type="eggNOG" id="COG3386">
    <property type="taxonomic scope" value="Bacteria"/>
</dbReference>
<dbReference type="HOGENOM" id="CLU_036110_3_1_5"/>
<dbReference type="BioCyc" id="CAULO:CC0820-MONOMER"/>
<dbReference type="BRENDA" id="3.1.1.110">
    <property type="organism ID" value="1218"/>
</dbReference>
<dbReference type="Proteomes" id="UP000001816">
    <property type="component" value="Chromosome"/>
</dbReference>
<dbReference type="GO" id="GO:0005509">
    <property type="term" value="F:calcium ion binding"/>
    <property type="evidence" value="ECO:0007669"/>
    <property type="project" value="TreeGrafter"/>
</dbReference>
<dbReference type="GO" id="GO:0004341">
    <property type="term" value="F:gluconolactonase activity"/>
    <property type="evidence" value="ECO:0007669"/>
    <property type="project" value="TreeGrafter"/>
</dbReference>
<dbReference type="GO" id="GO:0019853">
    <property type="term" value="P:L-ascorbic acid biosynthetic process"/>
    <property type="evidence" value="ECO:0007669"/>
    <property type="project" value="TreeGrafter"/>
</dbReference>
<dbReference type="Gene3D" id="2.120.10.30">
    <property type="entry name" value="TolB, C-terminal domain"/>
    <property type="match status" value="1"/>
</dbReference>
<dbReference type="InterPro" id="IPR011042">
    <property type="entry name" value="6-blade_b-propeller_TolB-like"/>
</dbReference>
<dbReference type="InterPro" id="IPR013658">
    <property type="entry name" value="SGL"/>
</dbReference>
<dbReference type="InterPro" id="IPR005511">
    <property type="entry name" value="SMP-30"/>
</dbReference>
<dbReference type="PANTHER" id="PTHR10907">
    <property type="entry name" value="REGUCALCIN"/>
    <property type="match status" value="1"/>
</dbReference>
<dbReference type="PANTHER" id="PTHR10907:SF47">
    <property type="entry name" value="REGUCALCIN"/>
    <property type="match status" value="1"/>
</dbReference>
<dbReference type="Pfam" id="PF08450">
    <property type="entry name" value="SGL"/>
    <property type="match status" value="1"/>
</dbReference>
<dbReference type="PRINTS" id="PR01790">
    <property type="entry name" value="SMP30FAMILY"/>
</dbReference>
<dbReference type="SUPFAM" id="SSF63829">
    <property type="entry name" value="Calcium-dependent phosphotriesterase"/>
    <property type="match status" value="1"/>
</dbReference>
<evidence type="ECO:0000250" key="1">
    <source>
        <dbReference type="UniProtKB" id="Q15493"/>
    </source>
</evidence>
<evidence type="ECO:0000269" key="2">
    <source>
    </source>
</evidence>
<evidence type="ECO:0000269" key="3">
    <source>
    </source>
</evidence>
<evidence type="ECO:0000269" key="4">
    <source>
    </source>
</evidence>
<evidence type="ECO:0000269" key="5">
    <source>
    </source>
</evidence>
<evidence type="ECO:0000303" key="6">
    <source>
    </source>
</evidence>
<evidence type="ECO:0000305" key="7"/>
<evidence type="ECO:0000305" key="8">
    <source>
    </source>
</evidence>
<evidence type="ECO:0000305" key="9">
    <source>
    </source>
</evidence>
<evidence type="ECO:0000312" key="10">
    <source>
        <dbReference type="EMBL" id="AAK22805.1"/>
    </source>
</evidence>
<evidence type="ECO:0007744" key="11">
    <source>
        <dbReference type="PDB" id="7PLB"/>
    </source>
</evidence>
<evidence type="ECO:0007744" key="12">
    <source>
        <dbReference type="PDB" id="7PLC"/>
    </source>
</evidence>
<evidence type="ECO:0007744" key="13">
    <source>
        <dbReference type="PDB" id="7PLD"/>
    </source>
</evidence>
<evidence type="ECO:0007829" key="14">
    <source>
        <dbReference type="PDB" id="7PLD"/>
    </source>
</evidence>
<comment type="function">
    <text evidence="2 3 4">Involved in the degradation of D-xylose (PubMed:22709678, PubMed:25073011). Catalyzes the hydrolysis of D-xylonolactone to D-xylonate (PubMed:25073011, PubMed:34633186).</text>
</comment>
<comment type="catalytic activity">
    <reaction evidence="3 4 8">
        <text>D-xylono-1,5-lactone + H2O = D-xylonate + H(+)</text>
        <dbReference type="Rhea" id="RHEA:59328"/>
        <dbReference type="ChEBI" id="CHEBI:15377"/>
        <dbReference type="ChEBI" id="CHEBI:15378"/>
        <dbReference type="ChEBI" id="CHEBI:15867"/>
        <dbReference type="ChEBI" id="CHEBI:17746"/>
        <dbReference type="EC" id="3.1.1.110"/>
    </reaction>
    <physiologicalReaction direction="left-to-right" evidence="3 4 8">
        <dbReference type="Rhea" id="RHEA:59329"/>
    </physiologicalReaction>
</comment>
<comment type="cofactor">
    <cofactor evidence="4 5">
        <name>Fe(2+)</name>
        <dbReference type="ChEBI" id="CHEBI:29033"/>
    </cofactor>
    <text evidence="5">Binds 1 Fe(2+) per subunit.</text>
</comment>
<comment type="similarity">
    <text evidence="7">Belongs to the SMP-30/CGR1 family.</text>
</comment>
<organism>
    <name type="scientific">Caulobacter vibrioides (strain ATCC 19089 / CIP 103742 / CB 15)</name>
    <name type="common">Caulobacter crescentus</name>
    <dbReference type="NCBI Taxonomy" id="190650"/>
    <lineage>
        <taxon>Bacteria</taxon>
        <taxon>Pseudomonadati</taxon>
        <taxon>Pseudomonadota</taxon>
        <taxon>Alphaproteobacteria</taxon>
        <taxon>Caulobacterales</taxon>
        <taxon>Caulobacteraceae</taxon>
        <taxon>Caulobacter</taxon>
    </lineage>
</organism>
<keyword id="KW-0002">3D-structure</keyword>
<keyword id="KW-0378">Hydrolase</keyword>
<keyword id="KW-0408">Iron</keyword>
<keyword id="KW-0479">Metal-binding</keyword>
<keyword id="KW-1185">Reference proteome</keyword>
<reference key="1">
    <citation type="journal article" date="2001" name="Proc. Natl. Acad. Sci. U.S.A.">
        <title>Complete genome sequence of Caulobacter crescentus.</title>
        <authorList>
            <person name="Nierman W.C."/>
            <person name="Feldblyum T.V."/>
            <person name="Laub M.T."/>
            <person name="Paulsen I.T."/>
            <person name="Nelson K.E."/>
            <person name="Eisen J.A."/>
            <person name="Heidelberg J.F."/>
            <person name="Alley M.R.K."/>
            <person name="Ohta N."/>
            <person name="Maddock J.R."/>
            <person name="Potocka I."/>
            <person name="Nelson W.C."/>
            <person name="Newton A."/>
            <person name="Stephens C."/>
            <person name="Phadke N.D."/>
            <person name="Ely B."/>
            <person name="DeBoy R.T."/>
            <person name="Dodson R.J."/>
            <person name="Durkin A.S."/>
            <person name="Gwinn M.L."/>
            <person name="Haft D.H."/>
            <person name="Kolonay J.F."/>
            <person name="Smit J."/>
            <person name="Craven M.B."/>
            <person name="Khouri H.M."/>
            <person name="Shetty J."/>
            <person name="Berry K.J."/>
            <person name="Utterback T.R."/>
            <person name="Tran K."/>
            <person name="Wolf A.M."/>
            <person name="Vamathevan J.J."/>
            <person name="Ermolaeva M.D."/>
            <person name="White O."/>
            <person name="Salzberg S.L."/>
            <person name="Venter J.C."/>
            <person name="Shapiro L."/>
            <person name="Fraser C.M."/>
        </authorList>
    </citation>
    <scope>NUCLEOTIDE SEQUENCE [LARGE SCALE GENOMIC DNA]</scope>
    <source>
        <strain>ATCC 19089 / CIP 103742 / CB 15</strain>
    </source>
</reference>
<reference key="2">
    <citation type="journal article" date="2012" name="Metab. Eng.">
        <title>Metabolic engineering of Saccharomyces cerevisiae for bioconversion of D-xylose to D-xylonate.</title>
        <authorList>
            <person name="Toivari M."/>
            <person name="Nygaard Y."/>
            <person name="Kumpula E.P."/>
            <person name="Vehkomaeki M.L."/>
            <person name="Bencina M."/>
            <person name="Valkonen M."/>
            <person name="Maaheimo H."/>
            <person name="Andberg M."/>
            <person name="Koivula A."/>
            <person name="Ruohonen L."/>
            <person name="Penttilae M."/>
            <person name="Wiebe M.G."/>
        </authorList>
    </citation>
    <scope>FUNCTION</scope>
</reference>
<reference key="3">
    <citation type="journal article" date="2014" name="Metab. Eng.">
        <title>Single cell and in vivo analyses elucidate the effect of xylC lactonase during production of D-xylonate in Saccharomyces cerevisiae.</title>
        <authorList>
            <person name="Nygaard Y."/>
            <person name="Maaheimo H."/>
            <person name="Mojzita D."/>
            <person name="Toivari M."/>
            <person name="Wiebe M."/>
            <person name="Resnekov O."/>
            <person name="Gustavo Pesce C."/>
            <person name="Ruohonen L."/>
            <person name="Penttilae M."/>
        </authorList>
    </citation>
    <scope>FUNCTION</scope>
    <scope>CATALYTIC ACTIVITY</scope>
</reference>
<reference key="4">
    <citation type="journal article" date="2021" name="Biochemistry">
        <title>Xylonolactonase from Caulobacter crescentus is a mononuclear nonheme iron hydrolase.</title>
        <authorList>
            <person name="Paeaekkoenen J."/>
            <person name="Penttinen L."/>
            <person name="Andberg M."/>
            <person name="Koivula A."/>
            <person name="Hakulinen N."/>
            <person name="Rouvinen J."/>
            <person name="Jaenis J."/>
        </authorList>
    </citation>
    <scope>FUNCTION</scope>
    <scope>CATALYTIC ACTIVITY</scope>
    <scope>COFACTOR</scope>
</reference>
<reference evidence="11 12 13" key="5">
    <citation type="journal article" date="2022" name="Protein Sci.">
        <title>Three-dimensional structure of xylonolactonase from Caulobacter crescentus: A mononuclear iron enzyme of the 6-bladed beta-propeller hydrolase family.</title>
        <authorList>
            <person name="Paeaekkoenen J."/>
            <person name="Hakulinen N."/>
            <person name="Andberg M."/>
            <person name="Koivula A."/>
            <person name="Rouvinen J."/>
        </authorList>
    </citation>
    <scope>X-RAY CRYSTALLOGRAPHY (1.70 ANGSTROMS) OF 2-289 IN COMPLEXES WITH IRON; D-XYLOPYRANOSE AND HYDROXY-2-PYRROLIDINONE</scope>
    <scope>COFACTOR</scope>
</reference>
<name>XYLC_CAUVC</name>
<sequence>MTAQVTCVWDLKATLGEGPIWHGDTLWFVDIKQRKIHNYHPATGERFSFDAPDQVTFLAPIVGATGFVVGLKTGIHRFHPATGFSLLLEVEDAALNNRPNDATVDAQGRLWFGTMHDGEENNSGSLYRMDLTGVARMDRDICITNGPCVSPDGKTFYHTDTLEKTIYAFDLAEDGLLSNKRVFVQFALGDDVYPDGSVVDSEGYLWTALWGGFGAVRFSPQGDAVTRIELPAPNVTKPCFGGPDLKTLYFTTARKGLSDETLAQYPLAGGVFAVPVDVAGQPQHEVRLV</sequence>
<accession>Q9A9Z1</accession>
<gene>
    <name evidence="6" type="primary">xylC</name>
    <name evidence="10" type="ordered locus">CC_0820</name>
</gene>
<protein>
    <recommendedName>
        <fullName evidence="6">D-xylonolactone lactonase</fullName>
        <ecNumber evidence="3 4 8">3.1.1.110</ecNumber>
    </recommendedName>
    <alternativeName>
        <fullName evidence="7">Xylono-1,5-lactonase</fullName>
    </alternativeName>
</protein>
<feature type="chain" id="PRO_0000456763" description="D-xylonolactone lactonase">
    <location>
        <begin position="1"/>
        <end position="289"/>
    </location>
</feature>
<feature type="active site" description="Proton donor/acceptor" evidence="1">
    <location>
        <position position="195"/>
    </location>
</feature>
<feature type="binding site" evidence="5 11 12 13">
    <location>
        <position position="17"/>
    </location>
    <ligand>
        <name>Fe(2+)</name>
        <dbReference type="ChEBI" id="CHEBI:29033"/>
    </ligand>
</feature>
<feature type="binding site" evidence="9 11 12">
    <location>
        <position position="98"/>
    </location>
    <ligand>
        <name>D-xylono-1,5-lactone</name>
        <dbReference type="ChEBI" id="CHEBI:15867"/>
    </ligand>
</feature>
<feature type="binding site" evidence="9 11 12">
    <location>
        <position position="100"/>
    </location>
    <ligand>
        <name>D-xylono-1,5-lactone</name>
        <dbReference type="ChEBI" id="CHEBI:15867"/>
    </ligand>
</feature>
<feature type="binding site" evidence="9 11">
    <location>
        <position position="119"/>
    </location>
    <ligand>
        <name>D-xylono-1,5-lactone</name>
        <dbReference type="ChEBI" id="CHEBI:15867"/>
    </ligand>
</feature>
<feature type="binding site" evidence="9 11 12">
    <location>
        <position position="145"/>
    </location>
    <ligand>
        <name>D-xylono-1,5-lactone</name>
        <dbReference type="ChEBI" id="CHEBI:15867"/>
    </ligand>
</feature>
<feature type="binding site" evidence="5 11 12 13">
    <location>
        <position position="145"/>
    </location>
    <ligand>
        <name>Fe(2+)</name>
        <dbReference type="ChEBI" id="CHEBI:29033"/>
    </ligand>
</feature>
<feature type="binding site" evidence="5 11 12 13">
    <location>
        <position position="195"/>
    </location>
    <ligand>
        <name>Fe(2+)</name>
        <dbReference type="ChEBI" id="CHEBI:29033"/>
    </ligand>
</feature>
<feature type="strand" evidence="14">
    <location>
        <begin position="6"/>
        <end position="9"/>
    </location>
</feature>
<feature type="strand" evidence="14">
    <location>
        <begin position="14"/>
        <end position="22"/>
    </location>
</feature>
<feature type="strand" evidence="14">
    <location>
        <begin position="25"/>
        <end position="30"/>
    </location>
</feature>
<feature type="turn" evidence="14">
    <location>
        <begin position="31"/>
        <end position="34"/>
    </location>
</feature>
<feature type="strand" evidence="14">
    <location>
        <begin position="35"/>
        <end position="39"/>
    </location>
</feature>
<feature type="turn" evidence="14">
    <location>
        <begin position="41"/>
        <end position="43"/>
    </location>
</feature>
<feature type="strand" evidence="14">
    <location>
        <begin position="46"/>
        <end position="50"/>
    </location>
</feature>
<feature type="strand" evidence="14">
    <location>
        <begin position="55"/>
        <end position="61"/>
    </location>
</feature>
<feature type="strand" evidence="14">
    <location>
        <begin position="64"/>
        <end position="71"/>
    </location>
</feature>
<feature type="strand" evidence="14">
    <location>
        <begin position="74"/>
        <end position="79"/>
    </location>
</feature>
<feature type="turn" evidence="14">
    <location>
        <begin position="80"/>
        <end position="82"/>
    </location>
</feature>
<feature type="strand" evidence="14">
    <location>
        <begin position="83"/>
        <end position="88"/>
    </location>
</feature>
<feature type="helix" evidence="14">
    <location>
        <begin position="93"/>
        <end position="95"/>
    </location>
</feature>
<feature type="strand" evidence="14">
    <location>
        <begin position="97"/>
        <end position="104"/>
    </location>
</feature>
<feature type="strand" evidence="14">
    <location>
        <begin position="110"/>
        <end position="116"/>
    </location>
</feature>
<feature type="strand" evidence="14">
    <location>
        <begin position="124"/>
        <end position="130"/>
    </location>
</feature>
<feature type="strand" evidence="14">
    <location>
        <begin position="133"/>
        <end position="149"/>
    </location>
</feature>
<feature type="strand" evidence="14">
    <location>
        <begin position="155"/>
        <end position="160"/>
    </location>
</feature>
<feature type="turn" evidence="14">
    <location>
        <begin position="161"/>
        <end position="164"/>
    </location>
</feature>
<feature type="strand" evidence="14">
    <location>
        <begin position="165"/>
        <end position="171"/>
    </location>
</feature>
<feature type="strand" evidence="14">
    <location>
        <begin position="177"/>
        <end position="185"/>
    </location>
</feature>
<feature type="strand" evidence="14">
    <location>
        <begin position="193"/>
        <end position="200"/>
    </location>
</feature>
<feature type="strand" evidence="14">
    <location>
        <begin position="205"/>
        <end position="210"/>
    </location>
</feature>
<feature type="strand" evidence="14">
    <location>
        <begin position="212"/>
        <end position="218"/>
    </location>
</feature>
<feature type="strand" evidence="14">
    <location>
        <begin position="224"/>
        <end position="229"/>
    </location>
</feature>
<feature type="strand" evidence="14">
    <location>
        <begin position="233"/>
        <end position="242"/>
    </location>
</feature>
<feature type="strand" evidence="14">
    <location>
        <begin position="247"/>
        <end position="253"/>
    </location>
</feature>
<feature type="helix" evidence="14">
    <location>
        <begin position="259"/>
        <end position="264"/>
    </location>
</feature>
<feature type="turn" evidence="14">
    <location>
        <begin position="266"/>
        <end position="269"/>
    </location>
</feature>
<feature type="strand" evidence="14">
    <location>
        <begin position="271"/>
        <end position="275"/>
    </location>
</feature>
<proteinExistence type="evidence at protein level"/>